<protein>
    <recommendedName>
        <fullName evidence="1">Large ribosomal subunit protein uL10</fullName>
    </recommendedName>
    <alternativeName>
        <fullName evidence="2">50S ribosomal protein L10</fullName>
    </alternativeName>
</protein>
<reference key="1">
    <citation type="journal article" date="2008" name="Appl. Environ. Microbiol.">
        <title>Genome of the epsilonproteobacterial chemolithoautotroph Sulfurimonas denitrificans.</title>
        <authorList>
            <person name="Sievert S.M."/>
            <person name="Scott K.M."/>
            <person name="Klotz M.G."/>
            <person name="Chain P.S.G."/>
            <person name="Hauser L.J."/>
            <person name="Hemp J."/>
            <person name="Huegler M."/>
            <person name="Land M."/>
            <person name="Lapidus A."/>
            <person name="Larimer F.W."/>
            <person name="Lucas S."/>
            <person name="Malfatti S.A."/>
            <person name="Meyer F."/>
            <person name="Paulsen I.T."/>
            <person name="Ren Q."/>
            <person name="Simon J."/>
            <person name="Bailey K."/>
            <person name="Diaz E."/>
            <person name="Fitzpatrick K.A."/>
            <person name="Glover B."/>
            <person name="Gwatney N."/>
            <person name="Korajkic A."/>
            <person name="Long A."/>
            <person name="Mobberley J.M."/>
            <person name="Pantry S.N."/>
            <person name="Pazder G."/>
            <person name="Peterson S."/>
            <person name="Quintanilla J.D."/>
            <person name="Sprinkle R."/>
            <person name="Stephens J."/>
            <person name="Thomas P."/>
            <person name="Vaughn R."/>
            <person name="Weber M.J."/>
            <person name="Wooten L.L."/>
        </authorList>
    </citation>
    <scope>NUCLEOTIDE SEQUENCE [LARGE SCALE GENOMIC DNA]</scope>
    <source>
        <strain>ATCC 33889 / DSM 1251</strain>
    </source>
</reference>
<accession>Q30TP9</accession>
<sequence length="159" mass="17378">MTKTQKAEIIEVLSNEFKDAQSVIFCDYKGLSVSKLENLRKMARAKDTKVQVVKNTLATIALSNASLTGVELKDTNILVWGADSVATSKVCADFAKDNEKFVIKSAYVDREAADAAKVEAFAKLPGREELLAMLAATWMAPVTCFTIGLDALRQKKEEA</sequence>
<organism>
    <name type="scientific">Sulfurimonas denitrificans (strain ATCC 33889 / DSM 1251)</name>
    <name type="common">Thiomicrospira denitrificans (strain ATCC 33889 / DSM 1251)</name>
    <dbReference type="NCBI Taxonomy" id="326298"/>
    <lineage>
        <taxon>Bacteria</taxon>
        <taxon>Pseudomonadati</taxon>
        <taxon>Campylobacterota</taxon>
        <taxon>Epsilonproteobacteria</taxon>
        <taxon>Campylobacterales</taxon>
        <taxon>Sulfurimonadaceae</taxon>
        <taxon>Sulfurimonas</taxon>
    </lineage>
</organism>
<comment type="function">
    <text evidence="1">Forms part of the ribosomal stalk, playing a central role in the interaction of the ribosome with GTP-bound translation factors.</text>
</comment>
<comment type="subunit">
    <text evidence="1">Part of the ribosomal stalk of the 50S ribosomal subunit. The N-terminus interacts with L11 and the large rRNA to form the base of the stalk. The C-terminus forms an elongated spine to which L12 dimers bind in a sequential fashion forming a multimeric L10(L12)X complex.</text>
</comment>
<comment type="similarity">
    <text evidence="1">Belongs to the universal ribosomal protein uL10 family.</text>
</comment>
<name>RL10_SULDN</name>
<gene>
    <name evidence="1" type="primary">rplJ</name>
    <name type="ordered locus">Suden_0351</name>
</gene>
<keyword id="KW-1185">Reference proteome</keyword>
<keyword id="KW-0687">Ribonucleoprotein</keyword>
<keyword id="KW-0689">Ribosomal protein</keyword>
<keyword id="KW-0694">RNA-binding</keyword>
<keyword id="KW-0699">rRNA-binding</keyword>
<dbReference type="EMBL" id="CP000153">
    <property type="protein sequence ID" value="ABB43632.1"/>
    <property type="molecule type" value="Genomic_DNA"/>
</dbReference>
<dbReference type="RefSeq" id="WP_011371986.1">
    <property type="nucleotide sequence ID" value="NC_007575.1"/>
</dbReference>
<dbReference type="SMR" id="Q30TP9"/>
<dbReference type="STRING" id="326298.Suden_0351"/>
<dbReference type="KEGG" id="tdn:Suden_0351"/>
<dbReference type="eggNOG" id="COG0244">
    <property type="taxonomic scope" value="Bacteria"/>
</dbReference>
<dbReference type="HOGENOM" id="CLU_092227_2_2_7"/>
<dbReference type="OrthoDB" id="3186107at2"/>
<dbReference type="Proteomes" id="UP000002714">
    <property type="component" value="Chromosome"/>
</dbReference>
<dbReference type="GO" id="GO:0015934">
    <property type="term" value="C:large ribosomal subunit"/>
    <property type="evidence" value="ECO:0007669"/>
    <property type="project" value="InterPro"/>
</dbReference>
<dbReference type="GO" id="GO:0070180">
    <property type="term" value="F:large ribosomal subunit rRNA binding"/>
    <property type="evidence" value="ECO:0007669"/>
    <property type="project" value="UniProtKB-UniRule"/>
</dbReference>
<dbReference type="GO" id="GO:0003735">
    <property type="term" value="F:structural constituent of ribosome"/>
    <property type="evidence" value="ECO:0007669"/>
    <property type="project" value="InterPro"/>
</dbReference>
<dbReference type="GO" id="GO:0006412">
    <property type="term" value="P:translation"/>
    <property type="evidence" value="ECO:0007669"/>
    <property type="project" value="UniProtKB-UniRule"/>
</dbReference>
<dbReference type="CDD" id="cd05797">
    <property type="entry name" value="Ribosomal_L10"/>
    <property type="match status" value="1"/>
</dbReference>
<dbReference type="Gene3D" id="3.30.70.1730">
    <property type="match status" value="1"/>
</dbReference>
<dbReference type="HAMAP" id="MF_00362">
    <property type="entry name" value="Ribosomal_uL10"/>
    <property type="match status" value="1"/>
</dbReference>
<dbReference type="InterPro" id="IPR001790">
    <property type="entry name" value="Ribosomal_uL10"/>
</dbReference>
<dbReference type="InterPro" id="IPR043141">
    <property type="entry name" value="Ribosomal_uL10-like_sf"/>
</dbReference>
<dbReference type="InterPro" id="IPR022973">
    <property type="entry name" value="Ribosomal_uL10_bac"/>
</dbReference>
<dbReference type="InterPro" id="IPR047865">
    <property type="entry name" value="Ribosomal_uL10_bac_type"/>
</dbReference>
<dbReference type="InterPro" id="IPR002363">
    <property type="entry name" value="Ribosomal_uL10_CS_bac"/>
</dbReference>
<dbReference type="NCBIfam" id="NF000955">
    <property type="entry name" value="PRK00099.1-1"/>
    <property type="match status" value="1"/>
</dbReference>
<dbReference type="PANTHER" id="PTHR11560">
    <property type="entry name" value="39S RIBOSOMAL PROTEIN L10, MITOCHONDRIAL"/>
    <property type="match status" value="1"/>
</dbReference>
<dbReference type="Pfam" id="PF00466">
    <property type="entry name" value="Ribosomal_L10"/>
    <property type="match status" value="1"/>
</dbReference>
<dbReference type="SUPFAM" id="SSF160369">
    <property type="entry name" value="Ribosomal protein L10-like"/>
    <property type="match status" value="1"/>
</dbReference>
<dbReference type="PROSITE" id="PS01109">
    <property type="entry name" value="RIBOSOMAL_L10"/>
    <property type="match status" value="1"/>
</dbReference>
<proteinExistence type="inferred from homology"/>
<evidence type="ECO:0000255" key="1">
    <source>
        <dbReference type="HAMAP-Rule" id="MF_00362"/>
    </source>
</evidence>
<evidence type="ECO:0000305" key="2"/>
<feature type="chain" id="PRO_0000234905" description="Large ribosomal subunit protein uL10">
    <location>
        <begin position="1"/>
        <end position="159"/>
    </location>
</feature>